<dbReference type="EMBL" id="AE006914">
    <property type="protein sequence ID" value="AAL03461.1"/>
    <property type="molecule type" value="Genomic_DNA"/>
</dbReference>
<dbReference type="PIR" id="C97815">
    <property type="entry name" value="C97815"/>
</dbReference>
<dbReference type="SMR" id="Q92H49"/>
<dbReference type="KEGG" id="rco:RC0923"/>
<dbReference type="HOGENOM" id="CLU_2083083_0_0_5"/>
<dbReference type="Proteomes" id="UP000000816">
    <property type="component" value="Chromosome"/>
</dbReference>
<dbReference type="Gene3D" id="1.20.1720.10">
    <property type="entry name" value="Multidrug resistance protein D"/>
    <property type="match status" value="1"/>
</dbReference>
<dbReference type="InterPro" id="IPR036259">
    <property type="entry name" value="MFS_trans_sf"/>
</dbReference>
<dbReference type="SUPFAM" id="SSF103473">
    <property type="entry name" value="MFS general substrate transporter"/>
    <property type="match status" value="1"/>
</dbReference>
<gene>
    <name type="ordered locus">RC0923</name>
</gene>
<accession>Q92H49</accession>
<name>Y923_RICCN</name>
<feature type="chain" id="PRO_0000281085" description="Putative uncharacterized protein RC0923">
    <location>
        <begin position="1"/>
        <end position="122"/>
    </location>
</feature>
<sequence length="122" mass="13409">MRLCILFAVNAFILEVISTSHNLAIAMICAPMMIHMVGHNLLIPMTLSYALKDYAKVTGTAGSIFGAIYYVVIAAVTYLVSKIHGPTISNFALLCFVLSISSAISFYCIWILYKKKKSNIPN</sequence>
<proteinExistence type="uncertain"/>
<reference key="1">
    <citation type="journal article" date="2001" name="Science">
        <title>Mechanisms of evolution in Rickettsia conorii and R. prowazekii.</title>
        <authorList>
            <person name="Ogata H."/>
            <person name="Audic S."/>
            <person name="Renesto-Audiffren P."/>
            <person name="Fournier P.-E."/>
            <person name="Barbe V."/>
            <person name="Samson D."/>
            <person name="Roux V."/>
            <person name="Cossart P."/>
            <person name="Weissenbach J."/>
            <person name="Claverie J.-M."/>
            <person name="Raoult D."/>
        </authorList>
    </citation>
    <scope>NUCLEOTIDE SEQUENCE [LARGE SCALE GENOMIC DNA]</scope>
    <source>
        <strain>ATCC VR-613 / Malish 7</strain>
    </source>
</reference>
<comment type="caution">
    <text evidence="1">Could be the product of a pseudogene. Corresponds to residues 290 to 407 of the R.prowazekii RP603, whereas RC0924 corresponds to residues 18 to 104 of RP603. To reconstruct a sequence that would be similar to R.prowazekii RP603, it would be necessary to correct 4 frameshifts and to bypass a stop codon.</text>
</comment>
<organism>
    <name type="scientific">Rickettsia conorii (strain ATCC VR-613 / Malish 7)</name>
    <dbReference type="NCBI Taxonomy" id="272944"/>
    <lineage>
        <taxon>Bacteria</taxon>
        <taxon>Pseudomonadati</taxon>
        <taxon>Pseudomonadota</taxon>
        <taxon>Alphaproteobacteria</taxon>
        <taxon>Rickettsiales</taxon>
        <taxon>Rickettsiaceae</taxon>
        <taxon>Rickettsieae</taxon>
        <taxon>Rickettsia</taxon>
        <taxon>spotted fever group</taxon>
    </lineage>
</organism>
<protein>
    <recommendedName>
        <fullName>Putative uncharacterized protein RC0923</fullName>
    </recommendedName>
</protein>
<evidence type="ECO:0000305" key="1"/>